<evidence type="ECO:0000250" key="1"/>
<evidence type="ECO:0000255" key="2">
    <source>
        <dbReference type="HAMAP-Rule" id="MF_00696"/>
    </source>
</evidence>
<accession>Q8ZEL9</accession>
<accession>Q0WF17</accession>
<proteinExistence type="inferred from homology"/>
<feature type="initiator methionine" description="Removed" evidence="1">
    <location>
        <position position="1"/>
    </location>
</feature>
<feature type="chain" id="PRO_0000050640" description="Fatty acid metabolism regulator protein">
    <location>
        <begin position="2"/>
        <end position="239"/>
    </location>
</feature>
<feature type="domain" description="HTH gntR-type" evidence="2">
    <location>
        <begin position="6"/>
        <end position="74"/>
    </location>
</feature>
<feature type="DNA-binding region" description="H-T-H motif" evidence="2">
    <location>
        <begin position="34"/>
        <end position="53"/>
    </location>
</feature>
<keyword id="KW-0010">Activator</keyword>
<keyword id="KW-0963">Cytoplasm</keyword>
<keyword id="KW-0238">DNA-binding</keyword>
<keyword id="KW-0276">Fatty acid metabolism</keyword>
<keyword id="KW-0443">Lipid metabolism</keyword>
<keyword id="KW-1185">Reference proteome</keyword>
<keyword id="KW-0678">Repressor</keyword>
<keyword id="KW-0804">Transcription</keyword>
<keyword id="KW-0805">Transcription regulation</keyword>
<organism>
    <name type="scientific">Yersinia pestis</name>
    <dbReference type="NCBI Taxonomy" id="632"/>
    <lineage>
        <taxon>Bacteria</taxon>
        <taxon>Pseudomonadati</taxon>
        <taxon>Pseudomonadota</taxon>
        <taxon>Gammaproteobacteria</taxon>
        <taxon>Enterobacterales</taxon>
        <taxon>Yersiniaceae</taxon>
        <taxon>Yersinia</taxon>
    </lineage>
</organism>
<name>FADR_YERPE</name>
<sequence>MVIKAQSPAGFAEEYIIESIWNNRFPPGSILPAERELSELIGVTRTTLREVLQRLARDGWLTIQHGKPTKVNNFWETSGLNILETLARLDHDSVPQLIDNLLAVRTNIATIFVRTAIRHHPEKAQEILARAKTVDDNAEAFTALDYGIFRGLAFASGNPIYGLILNGLKGLYTRVGRYYFSNPEARKLALTFYNKLSTLCDTESYDQVLECLRTYGKESGAIWHSMQGTMPSDLAEARR</sequence>
<protein>
    <recommendedName>
        <fullName evidence="2">Fatty acid metabolism regulator protein</fullName>
    </recommendedName>
</protein>
<gene>
    <name evidence="2" type="primary">fadR</name>
    <name type="ordered locus">YPO2144</name>
    <name type="ordered locus">y2177</name>
    <name type="ordered locus">YP_1946</name>
</gene>
<dbReference type="EMBL" id="AL590842">
    <property type="protein sequence ID" value="CAL20777.1"/>
    <property type="molecule type" value="Genomic_DNA"/>
</dbReference>
<dbReference type="EMBL" id="AE009952">
    <property type="protein sequence ID" value="AAM85739.1"/>
    <property type="molecule type" value="Genomic_DNA"/>
</dbReference>
<dbReference type="EMBL" id="AE017042">
    <property type="protein sequence ID" value="AAS62163.1"/>
    <property type="molecule type" value="Genomic_DNA"/>
</dbReference>
<dbReference type="PIR" id="AF0261">
    <property type="entry name" value="AF0261"/>
</dbReference>
<dbReference type="RefSeq" id="WP_002211688.1">
    <property type="nucleotide sequence ID" value="NZ_WUCM01000055.1"/>
</dbReference>
<dbReference type="RefSeq" id="YP_002347121.1">
    <property type="nucleotide sequence ID" value="NC_003143.1"/>
</dbReference>
<dbReference type="SMR" id="Q8ZEL9"/>
<dbReference type="IntAct" id="Q8ZEL9">
    <property type="interactions" value="3"/>
</dbReference>
<dbReference type="STRING" id="214092.YPO2144"/>
<dbReference type="PaxDb" id="214092-YPO2144"/>
<dbReference type="DNASU" id="1147124"/>
<dbReference type="EnsemblBacteria" id="AAS62163">
    <property type="protein sequence ID" value="AAS62163"/>
    <property type="gene ID" value="YP_1946"/>
</dbReference>
<dbReference type="GeneID" id="96665563"/>
<dbReference type="KEGG" id="ype:YPO2144"/>
<dbReference type="KEGG" id="ypk:y2177"/>
<dbReference type="KEGG" id="ypm:YP_1946"/>
<dbReference type="PATRIC" id="fig|214092.21.peg.2531"/>
<dbReference type="eggNOG" id="COG2186">
    <property type="taxonomic scope" value="Bacteria"/>
</dbReference>
<dbReference type="HOGENOM" id="CLU_017584_9_4_6"/>
<dbReference type="OMA" id="TRVLDWR"/>
<dbReference type="OrthoDB" id="5683977at2"/>
<dbReference type="Proteomes" id="UP000000815">
    <property type="component" value="Chromosome"/>
</dbReference>
<dbReference type="Proteomes" id="UP000001019">
    <property type="component" value="Chromosome"/>
</dbReference>
<dbReference type="Proteomes" id="UP000002490">
    <property type="component" value="Chromosome"/>
</dbReference>
<dbReference type="GO" id="GO:0005737">
    <property type="term" value="C:cytoplasm"/>
    <property type="evidence" value="ECO:0007669"/>
    <property type="project" value="UniProtKB-SubCell"/>
</dbReference>
<dbReference type="GO" id="GO:0003677">
    <property type="term" value="F:DNA binding"/>
    <property type="evidence" value="ECO:0007669"/>
    <property type="project" value="UniProtKB-KW"/>
</dbReference>
<dbReference type="GO" id="GO:0003700">
    <property type="term" value="F:DNA-binding transcription factor activity"/>
    <property type="evidence" value="ECO:0007669"/>
    <property type="project" value="UniProtKB-UniRule"/>
</dbReference>
<dbReference type="GO" id="GO:0000062">
    <property type="term" value="F:fatty-acyl-CoA binding"/>
    <property type="evidence" value="ECO:0007669"/>
    <property type="project" value="InterPro"/>
</dbReference>
<dbReference type="GO" id="GO:0006631">
    <property type="term" value="P:fatty acid metabolic process"/>
    <property type="evidence" value="ECO:0007669"/>
    <property type="project" value="UniProtKB-KW"/>
</dbReference>
<dbReference type="GO" id="GO:0019217">
    <property type="term" value="P:regulation of fatty acid metabolic process"/>
    <property type="evidence" value="ECO:0007669"/>
    <property type="project" value="UniProtKB-UniRule"/>
</dbReference>
<dbReference type="CDD" id="cd07377">
    <property type="entry name" value="WHTH_GntR"/>
    <property type="match status" value="1"/>
</dbReference>
<dbReference type="FunFam" id="1.10.10.10:FF:000036">
    <property type="entry name" value="Fatty acid metabolism regulator protein"/>
    <property type="match status" value="1"/>
</dbReference>
<dbReference type="Gene3D" id="1.20.120.530">
    <property type="entry name" value="GntR ligand-binding domain-like"/>
    <property type="match status" value="1"/>
</dbReference>
<dbReference type="Gene3D" id="1.10.10.10">
    <property type="entry name" value="Winged helix-like DNA-binding domain superfamily/Winged helix DNA-binding domain"/>
    <property type="match status" value="1"/>
</dbReference>
<dbReference type="HAMAP" id="MF_00696">
    <property type="entry name" value="HTH_FadR"/>
    <property type="match status" value="1"/>
</dbReference>
<dbReference type="InterPro" id="IPR014178">
    <property type="entry name" value="FA-response_TF_FadR"/>
</dbReference>
<dbReference type="InterPro" id="IPR028374">
    <property type="entry name" value="FadR_C"/>
</dbReference>
<dbReference type="InterPro" id="IPR008920">
    <property type="entry name" value="TF_FadR/GntR_C"/>
</dbReference>
<dbReference type="InterPro" id="IPR000524">
    <property type="entry name" value="Tscrpt_reg_HTH_GntR"/>
</dbReference>
<dbReference type="InterPro" id="IPR036388">
    <property type="entry name" value="WH-like_DNA-bd_sf"/>
</dbReference>
<dbReference type="InterPro" id="IPR036390">
    <property type="entry name" value="WH_DNA-bd_sf"/>
</dbReference>
<dbReference type="NCBIfam" id="TIGR02812">
    <property type="entry name" value="fadR_gamma"/>
    <property type="match status" value="1"/>
</dbReference>
<dbReference type="NCBIfam" id="NF003444">
    <property type="entry name" value="PRK04984.1"/>
    <property type="match status" value="1"/>
</dbReference>
<dbReference type="PANTHER" id="PTHR43537:SF52">
    <property type="entry name" value="FATTY ACID METABOLISM REGULATOR PROTEIN"/>
    <property type="match status" value="1"/>
</dbReference>
<dbReference type="PANTHER" id="PTHR43537">
    <property type="entry name" value="TRANSCRIPTIONAL REGULATOR, GNTR FAMILY"/>
    <property type="match status" value="1"/>
</dbReference>
<dbReference type="Pfam" id="PF07840">
    <property type="entry name" value="FadR_C"/>
    <property type="match status" value="1"/>
</dbReference>
<dbReference type="Pfam" id="PF00392">
    <property type="entry name" value="GntR"/>
    <property type="match status" value="1"/>
</dbReference>
<dbReference type="PRINTS" id="PR00035">
    <property type="entry name" value="HTHGNTR"/>
</dbReference>
<dbReference type="SMART" id="SM00345">
    <property type="entry name" value="HTH_GNTR"/>
    <property type="match status" value="1"/>
</dbReference>
<dbReference type="SUPFAM" id="SSF48008">
    <property type="entry name" value="GntR ligand-binding domain-like"/>
    <property type="match status" value="1"/>
</dbReference>
<dbReference type="SUPFAM" id="SSF46785">
    <property type="entry name" value="Winged helix' DNA-binding domain"/>
    <property type="match status" value="1"/>
</dbReference>
<dbReference type="PROSITE" id="PS50949">
    <property type="entry name" value="HTH_GNTR"/>
    <property type="match status" value="1"/>
</dbReference>
<reference key="1">
    <citation type="journal article" date="2001" name="Nature">
        <title>Genome sequence of Yersinia pestis, the causative agent of plague.</title>
        <authorList>
            <person name="Parkhill J."/>
            <person name="Wren B.W."/>
            <person name="Thomson N.R."/>
            <person name="Titball R.W."/>
            <person name="Holden M.T.G."/>
            <person name="Prentice M.B."/>
            <person name="Sebaihia M."/>
            <person name="James K.D."/>
            <person name="Churcher C.M."/>
            <person name="Mungall K.L."/>
            <person name="Baker S."/>
            <person name="Basham D."/>
            <person name="Bentley S.D."/>
            <person name="Brooks K."/>
            <person name="Cerdeno-Tarraga A.-M."/>
            <person name="Chillingworth T."/>
            <person name="Cronin A."/>
            <person name="Davies R.M."/>
            <person name="Davis P."/>
            <person name="Dougan G."/>
            <person name="Feltwell T."/>
            <person name="Hamlin N."/>
            <person name="Holroyd S."/>
            <person name="Jagels K."/>
            <person name="Karlyshev A.V."/>
            <person name="Leather S."/>
            <person name="Moule S."/>
            <person name="Oyston P.C.F."/>
            <person name="Quail M.A."/>
            <person name="Rutherford K.M."/>
            <person name="Simmonds M."/>
            <person name="Skelton J."/>
            <person name="Stevens K."/>
            <person name="Whitehead S."/>
            <person name="Barrell B.G."/>
        </authorList>
    </citation>
    <scope>NUCLEOTIDE SEQUENCE [LARGE SCALE GENOMIC DNA]</scope>
    <source>
        <strain>CO-92 / Biovar Orientalis</strain>
    </source>
</reference>
<reference key="2">
    <citation type="journal article" date="2002" name="J. Bacteriol.">
        <title>Genome sequence of Yersinia pestis KIM.</title>
        <authorList>
            <person name="Deng W."/>
            <person name="Burland V."/>
            <person name="Plunkett G. III"/>
            <person name="Boutin A."/>
            <person name="Mayhew G.F."/>
            <person name="Liss P."/>
            <person name="Perna N.T."/>
            <person name="Rose D.J."/>
            <person name="Mau B."/>
            <person name="Zhou S."/>
            <person name="Schwartz D.C."/>
            <person name="Fetherston J.D."/>
            <person name="Lindler L.E."/>
            <person name="Brubaker R.R."/>
            <person name="Plano G.V."/>
            <person name="Straley S.C."/>
            <person name="McDonough K.A."/>
            <person name="Nilles M.L."/>
            <person name="Matson J.S."/>
            <person name="Blattner F.R."/>
            <person name="Perry R.D."/>
        </authorList>
    </citation>
    <scope>NUCLEOTIDE SEQUENCE [LARGE SCALE GENOMIC DNA]</scope>
    <source>
        <strain>KIM10+ / Biovar Mediaevalis</strain>
    </source>
</reference>
<reference key="3">
    <citation type="journal article" date="2004" name="DNA Res.">
        <title>Complete genome sequence of Yersinia pestis strain 91001, an isolate avirulent to humans.</title>
        <authorList>
            <person name="Song Y."/>
            <person name="Tong Z."/>
            <person name="Wang J."/>
            <person name="Wang L."/>
            <person name="Guo Z."/>
            <person name="Han Y."/>
            <person name="Zhang J."/>
            <person name="Pei D."/>
            <person name="Zhou D."/>
            <person name="Qin H."/>
            <person name="Pang X."/>
            <person name="Han Y."/>
            <person name="Zhai J."/>
            <person name="Li M."/>
            <person name="Cui B."/>
            <person name="Qi Z."/>
            <person name="Jin L."/>
            <person name="Dai R."/>
            <person name="Chen F."/>
            <person name="Li S."/>
            <person name="Ye C."/>
            <person name="Du Z."/>
            <person name="Lin W."/>
            <person name="Wang J."/>
            <person name="Yu J."/>
            <person name="Yang H."/>
            <person name="Wang J."/>
            <person name="Huang P."/>
            <person name="Yang R."/>
        </authorList>
    </citation>
    <scope>NUCLEOTIDE SEQUENCE [LARGE SCALE GENOMIC DNA]</scope>
    <source>
        <strain>91001 / Biovar Mediaevalis</strain>
    </source>
</reference>
<comment type="function">
    <text evidence="2">Multifunctional regulator of fatty acid metabolism. Represses transcription of at least eight genes required for fatty acid transport and beta-oxidation including fadA, fadB, fadD, fadL and fadE. Activates transcription of at least three genes required for unsaturated fatty acid biosynthesis: fabA, fabB and iclR, the gene encoding the transcriptional regulator of the aceBAK operon encoding the glyoxylate shunt enzymes. Binding of FadR is specifically inhibited by long chain fatty acyl-CoA compounds (By similarity).</text>
</comment>
<comment type="subunit">
    <text evidence="2">Homodimer.</text>
</comment>
<comment type="subcellular location">
    <subcellularLocation>
        <location evidence="2">Cytoplasm</location>
    </subcellularLocation>
</comment>